<sequence length="202" mass="21554">MPAADFVYLASQSPRRAQLLEQLGVRYQRLAPAPDEDTEALEAVLGKESPVAYVKRVTRLKLDAASERAKRQGLAPAPILCSDTTVALGRSILGKPANAAEATRMLRQLSGATHRVLTAVAVQQGRRRIEALSISRVTFAPMTAAQISSYVASGEPMGKAGAYAVQGRVAMYISHISGSYSGIMGLPLHETAWLLRAAGLKI</sequence>
<keyword id="KW-0963">Cytoplasm</keyword>
<keyword id="KW-0378">Hydrolase</keyword>
<keyword id="KW-0546">Nucleotide metabolism</keyword>
<keyword id="KW-1185">Reference proteome</keyword>
<gene>
    <name type="ordered locus">Bpro_1974</name>
</gene>
<dbReference type="EC" id="3.6.1.9" evidence="1"/>
<dbReference type="EMBL" id="CP000316">
    <property type="protein sequence ID" value="ABE43904.1"/>
    <property type="molecule type" value="Genomic_DNA"/>
</dbReference>
<dbReference type="RefSeq" id="WP_011482903.1">
    <property type="nucleotide sequence ID" value="NC_007948.1"/>
</dbReference>
<dbReference type="SMR" id="Q12C38"/>
<dbReference type="STRING" id="296591.Bpro_1974"/>
<dbReference type="KEGG" id="pol:Bpro_1974"/>
<dbReference type="eggNOG" id="COG0424">
    <property type="taxonomic scope" value="Bacteria"/>
</dbReference>
<dbReference type="HOGENOM" id="CLU_040416_2_1_4"/>
<dbReference type="OrthoDB" id="9807767at2"/>
<dbReference type="Proteomes" id="UP000001983">
    <property type="component" value="Chromosome"/>
</dbReference>
<dbReference type="GO" id="GO:0005737">
    <property type="term" value="C:cytoplasm"/>
    <property type="evidence" value="ECO:0007669"/>
    <property type="project" value="UniProtKB-SubCell"/>
</dbReference>
<dbReference type="GO" id="GO:0036218">
    <property type="term" value="F:dTTP diphosphatase activity"/>
    <property type="evidence" value="ECO:0007669"/>
    <property type="project" value="RHEA"/>
</dbReference>
<dbReference type="GO" id="GO:0036221">
    <property type="term" value="F:UTP diphosphatase activity"/>
    <property type="evidence" value="ECO:0007669"/>
    <property type="project" value="RHEA"/>
</dbReference>
<dbReference type="GO" id="GO:0009117">
    <property type="term" value="P:nucleotide metabolic process"/>
    <property type="evidence" value="ECO:0007669"/>
    <property type="project" value="UniProtKB-KW"/>
</dbReference>
<dbReference type="CDD" id="cd00555">
    <property type="entry name" value="Maf"/>
    <property type="match status" value="1"/>
</dbReference>
<dbReference type="Gene3D" id="3.90.950.10">
    <property type="match status" value="1"/>
</dbReference>
<dbReference type="HAMAP" id="MF_00528">
    <property type="entry name" value="Maf"/>
    <property type="match status" value="1"/>
</dbReference>
<dbReference type="InterPro" id="IPR029001">
    <property type="entry name" value="ITPase-like_fam"/>
</dbReference>
<dbReference type="InterPro" id="IPR003697">
    <property type="entry name" value="Maf-like"/>
</dbReference>
<dbReference type="NCBIfam" id="TIGR00172">
    <property type="entry name" value="maf"/>
    <property type="match status" value="1"/>
</dbReference>
<dbReference type="PANTHER" id="PTHR43213">
    <property type="entry name" value="BIFUNCTIONAL DTTP/UTP PYROPHOSPHATASE/METHYLTRANSFERASE PROTEIN-RELATED"/>
    <property type="match status" value="1"/>
</dbReference>
<dbReference type="PANTHER" id="PTHR43213:SF5">
    <property type="entry name" value="BIFUNCTIONAL DTTP_UTP PYROPHOSPHATASE_METHYLTRANSFERASE PROTEIN-RELATED"/>
    <property type="match status" value="1"/>
</dbReference>
<dbReference type="Pfam" id="PF02545">
    <property type="entry name" value="Maf"/>
    <property type="match status" value="1"/>
</dbReference>
<dbReference type="PIRSF" id="PIRSF006305">
    <property type="entry name" value="Maf"/>
    <property type="match status" value="1"/>
</dbReference>
<dbReference type="SUPFAM" id="SSF52972">
    <property type="entry name" value="ITPase-like"/>
    <property type="match status" value="1"/>
</dbReference>
<proteinExistence type="inferred from homology"/>
<name>NTPPA_POLSJ</name>
<accession>Q12C38</accession>
<reference key="1">
    <citation type="journal article" date="2008" name="Appl. Environ. Microbiol.">
        <title>The genome of Polaromonas sp. strain JS666: insights into the evolution of a hydrocarbon- and xenobiotic-degrading bacterium, and features of relevance to biotechnology.</title>
        <authorList>
            <person name="Mattes T.E."/>
            <person name="Alexander A.K."/>
            <person name="Richardson P.M."/>
            <person name="Munk A.C."/>
            <person name="Han C.S."/>
            <person name="Stothard P."/>
            <person name="Coleman N.V."/>
        </authorList>
    </citation>
    <scope>NUCLEOTIDE SEQUENCE [LARGE SCALE GENOMIC DNA]</scope>
    <source>
        <strain>JS666 / ATCC BAA-500</strain>
    </source>
</reference>
<evidence type="ECO:0000255" key="1">
    <source>
        <dbReference type="HAMAP-Rule" id="MF_00528"/>
    </source>
</evidence>
<feature type="chain" id="PRO_0000267368" description="dTTP/UTP pyrophosphatase">
    <location>
        <begin position="1"/>
        <end position="202"/>
    </location>
</feature>
<feature type="active site" description="Proton acceptor" evidence="1">
    <location>
        <position position="83"/>
    </location>
</feature>
<feature type="site" description="Important for substrate specificity" evidence="1">
    <location>
        <position position="15"/>
    </location>
</feature>
<feature type="site" description="Important for substrate specificity" evidence="1">
    <location>
        <position position="84"/>
    </location>
</feature>
<feature type="site" description="Important for substrate specificity" evidence="1">
    <location>
        <position position="166"/>
    </location>
</feature>
<organism>
    <name type="scientific">Polaromonas sp. (strain JS666 / ATCC BAA-500)</name>
    <dbReference type="NCBI Taxonomy" id="296591"/>
    <lineage>
        <taxon>Bacteria</taxon>
        <taxon>Pseudomonadati</taxon>
        <taxon>Pseudomonadota</taxon>
        <taxon>Betaproteobacteria</taxon>
        <taxon>Burkholderiales</taxon>
        <taxon>Comamonadaceae</taxon>
        <taxon>Polaromonas</taxon>
    </lineage>
</organism>
<protein>
    <recommendedName>
        <fullName evidence="1">dTTP/UTP pyrophosphatase</fullName>
        <shortName evidence="1">dTTPase/UTPase</shortName>
        <ecNumber evidence="1">3.6.1.9</ecNumber>
    </recommendedName>
    <alternativeName>
        <fullName evidence="1">Nucleoside triphosphate pyrophosphatase</fullName>
    </alternativeName>
    <alternativeName>
        <fullName evidence="1">Nucleotide pyrophosphatase</fullName>
        <shortName evidence="1">Nucleotide PPase</shortName>
    </alternativeName>
</protein>
<comment type="function">
    <text evidence="1">Nucleoside triphosphate pyrophosphatase that hydrolyzes dTTP and UTP. May have a dual role in cell division arrest and in preventing the incorporation of modified nucleotides into cellular nucleic acids.</text>
</comment>
<comment type="catalytic activity">
    <reaction evidence="1">
        <text>dTTP + H2O = dTMP + diphosphate + H(+)</text>
        <dbReference type="Rhea" id="RHEA:28534"/>
        <dbReference type="ChEBI" id="CHEBI:15377"/>
        <dbReference type="ChEBI" id="CHEBI:15378"/>
        <dbReference type="ChEBI" id="CHEBI:33019"/>
        <dbReference type="ChEBI" id="CHEBI:37568"/>
        <dbReference type="ChEBI" id="CHEBI:63528"/>
        <dbReference type="EC" id="3.6.1.9"/>
    </reaction>
</comment>
<comment type="catalytic activity">
    <reaction evidence="1">
        <text>UTP + H2O = UMP + diphosphate + H(+)</text>
        <dbReference type="Rhea" id="RHEA:29395"/>
        <dbReference type="ChEBI" id="CHEBI:15377"/>
        <dbReference type="ChEBI" id="CHEBI:15378"/>
        <dbReference type="ChEBI" id="CHEBI:33019"/>
        <dbReference type="ChEBI" id="CHEBI:46398"/>
        <dbReference type="ChEBI" id="CHEBI:57865"/>
        <dbReference type="EC" id="3.6.1.9"/>
    </reaction>
</comment>
<comment type="cofactor">
    <cofactor evidence="1">
        <name>a divalent metal cation</name>
        <dbReference type="ChEBI" id="CHEBI:60240"/>
    </cofactor>
</comment>
<comment type="subcellular location">
    <subcellularLocation>
        <location evidence="1">Cytoplasm</location>
    </subcellularLocation>
</comment>
<comment type="similarity">
    <text evidence="1">Belongs to the Maf family. YhdE subfamily.</text>
</comment>